<feature type="chain" id="PRO_1000013278" description="Large ribosomal subunit protein bL34">
    <location>
        <begin position="1"/>
        <end position="44"/>
    </location>
</feature>
<feature type="region of interest" description="Disordered" evidence="2">
    <location>
        <begin position="1"/>
        <end position="44"/>
    </location>
</feature>
<feature type="compositionally biased region" description="Basic residues" evidence="2">
    <location>
        <begin position="1"/>
        <end position="19"/>
    </location>
</feature>
<feature type="compositionally biased region" description="Basic residues" evidence="2">
    <location>
        <begin position="31"/>
        <end position="44"/>
    </location>
</feature>
<reference key="1">
    <citation type="journal article" date="2004" name="Nucleic Acids Res.">
        <title>The genome sequence of Bacillus cereus ATCC 10987 reveals metabolic adaptations and a large plasmid related to Bacillus anthracis pXO1.</title>
        <authorList>
            <person name="Rasko D.A."/>
            <person name="Ravel J."/>
            <person name="Oekstad O.A."/>
            <person name="Helgason E."/>
            <person name="Cer R.Z."/>
            <person name="Jiang L."/>
            <person name="Shores K.A."/>
            <person name="Fouts D.E."/>
            <person name="Tourasse N.J."/>
            <person name="Angiuoli S.V."/>
            <person name="Kolonay J.F."/>
            <person name="Nelson W.C."/>
            <person name="Kolstoe A.-B."/>
            <person name="Fraser C.M."/>
            <person name="Read T.D."/>
        </authorList>
    </citation>
    <scope>NUCLEOTIDE SEQUENCE [LARGE SCALE GENOMIC DNA]</scope>
    <source>
        <strain>ATCC 10987 / NRS 248</strain>
    </source>
</reference>
<accession>Q72WT9</accession>
<evidence type="ECO:0000255" key="1">
    <source>
        <dbReference type="HAMAP-Rule" id="MF_00391"/>
    </source>
</evidence>
<evidence type="ECO:0000256" key="2">
    <source>
        <dbReference type="SAM" id="MobiDB-lite"/>
    </source>
</evidence>
<evidence type="ECO:0000305" key="3"/>
<keyword id="KW-0687">Ribonucleoprotein</keyword>
<keyword id="KW-0689">Ribosomal protein</keyword>
<comment type="similarity">
    <text evidence="1">Belongs to the bacterial ribosomal protein bL34 family.</text>
</comment>
<organism>
    <name type="scientific">Bacillus cereus (strain ATCC 10987 / NRS 248)</name>
    <dbReference type="NCBI Taxonomy" id="222523"/>
    <lineage>
        <taxon>Bacteria</taxon>
        <taxon>Bacillati</taxon>
        <taxon>Bacillota</taxon>
        <taxon>Bacilli</taxon>
        <taxon>Bacillales</taxon>
        <taxon>Bacillaceae</taxon>
        <taxon>Bacillus</taxon>
        <taxon>Bacillus cereus group</taxon>
    </lineage>
</organism>
<sequence length="44" mass="5170">MKRTYQPNKRKRSKVHGFRSRMSTANGRKVLAARRRKGRKVLSA</sequence>
<protein>
    <recommendedName>
        <fullName evidence="1">Large ribosomal subunit protein bL34</fullName>
    </recommendedName>
    <alternativeName>
        <fullName evidence="3">50S ribosomal protein L34</fullName>
    </alternativeName>
</protein>
<gene>
    <name evidence="1" type="primary">rpmH</name>
    <name type="ordered locus">BCE_5639</name>
</gene>
<name>RL34_BACC1</name>
<dbReference type="EMBL" id="AE017194">
    <property type="protein sequence ID" value="AAS44539.1"/>
    <property type="molecule type" value="Genomic_DNA"/>
</dbReference>
<dbReference type="SMR" id="Q72WT9"/>
<dbReference type="KEGG" id="bca:BCE_5639"/>
<dbReference type="HOGENOM" id="CLU_129938_2_0_9"/>
<dbReference type="Proteomes" id="UP000002527">
    <property type="component" value="Chromosome"/>
</dbReference>
<dbReference type="GO" id="GO:1990904">
    <property type="term" value="C:ribonucleoprotein complex"/>
    <property type="evidence" value="ECO:0007669"/>
    <property type="project" value="UniProtKB-KW"/>
</dbReference>
<dbReference type="GO" id="GO:0005840">
    <property type="term" value="C:ribosome"/>
    <property type="evidence" value="ECO:0007669"/>
    <property type="project" value="UniProtKB-KW"/>
</dbReference>
<dbReference type="GO" id="GO:0003735">
    <property type="term" value="F:structural constituent of ribosome"/>
    <property type="evidence" value="ECO:0007669"/>
    <property type="project" value="InterPro"/>
</dbReference>
<dbReference type="GO" id="GO:0006412">
    <property type="term" value="P:translation"/>
    <property type="evidence" value="ECO:0007669"/>
    <property type="project" value="UniProtKB-UniRule"/>
</dbReference>
<dbReference type="FunFam" id="1.10.287.3980:FF:000001">
    <property type="entry name" value="Mitochondrial ribosomal protein L34"/>
    <property type="match status" value="1"/>
</dbReference>
<dbReference type="Gene3D" id="1.10.287.3980">
    <property type="match status" value="1"/>
</dbReference>
<dbReference type="HAMAP" id="MF_00391">
    <property type="entry name" value="Ribosomal_bL34"/>
    <property type="match status" value="1"/>
</dbReference>
<dbReference type="InterPro" id="IPR000271">
    <property type="entry name" value="Ribosomal_bL34"/>
</dbReference>
<dbReference type="InterPro" id="IPR020939">
    <property type="entry name" value="Ribosomal_bL34_CS"/>
</dbReference>
<dbReference type="NCBIfam" id="TIGR01030">
    <property type="entry name" value="rpmH_bact"/>
    <property type="match status" value="1"/>
</dbReference>
<dbReference type="PANTHER" id="PTHR14503:SF4">
    <property type="entry name" value="LARGE RIBOSOMAL SUBUNIT PROTEIN BL34M"/>
    <property type="match status" value="1"/>
</dbReference>
<dbReference type="PANTHER" id="PTHR14503">
    <property type="entry name" value="MITOCHONDRIAL RIBOSOMAL PROTEIN 34 FAMILY MEMBER"/>
    <property type="match status" value="1"/>
</dbReference>
<dbReference type="Pfam" id="PF00468">
    <property type="entry name" value="Ribosomal_L34"/>
    <property type="match status" value="1"/>
</dbReference>
<dbReference type="PROSITE" id="PS00784">
    <property type="entry name" value="RIBOSOMAL_L34"/>
    <property type="match status" value="1"/>
</dbReference>
<proteinExistence type="inferred from homology"/>